<protein>
    <recommendedName>
        <fullName>Protein PAR32</fullName>
    </recommendedName>
    <alternativeName>
        <fullName>Protein phosphorylated after rapamycin 32</fullName>
    </alternativeName>
</protein>
<dbReference type="EMBL" id="Z67750">
    <property type="protein sequence ID" value="CAA91572.1"/>
    <property type="molecule type" value="Genomic_DNA"/>
</dbReference>
<dbReference type="EMBL" id="Z74221">
    <property type="protein sequence ID" value="CAA98746.1"/>
    <property type="molecule type" value="Genomic_DNA"/>
</dbReference>
<dbReference type="EMBL" id="AY558569">
    <property type="protein sequence ID" value="AAS56895.1"/>
    <property type="molecule type" value="Genomic_DNA"/>
</dbReference>
<dbReference type="EMBL" id="BK006938">
    <property type="protein sequence ID" value="DAA11689.1"/>
    <property type="molecule type" value="Genomic_DNA"/>
</dbReference>
<dbReference type="PIR" id="S61039">
    <property type="entry name" value="S61039"/>
</dbReference>
<dbReference type="RefSeq" id="NP_010108.1">
    <property type="nucleotide sequence ID" value="NM_001180233.1"/>
</dbReference>
<dbReference type="BioGRID" id="31893">
    <property type="interactions" value="117"/>
</dbReference>
<dbReference type="DIP" id="DIP-2921N"/>
<dbReference type="FunCoup" id="Q12515">
    <property type="interactions" value="52"/>
</dbReference>
<dbReference type="IntAct" id="Q12515">
    <property type="interactions" value="11"/>
</dbReference>
<dbReference type="MINT" id="Q12515"/>
<dbReference type="STRING" id="4932.YDL173W"/>
<dbReference type="GlyGen" id="Q12515">
    <property type="glycosylation" value="1 site, 1 O-linked glycan (1 site)"/>
</dbReference>
<dbReference type="iPTMnet" id="Q12515"/>
<dbReference type="PaxDb" id="4932-YDL173W"/>
<dbReference type="PeptideAtlas" id="Q12515"/>
<dbReference type="EnsemblFungi" id="YDL173W_mRNA">
    <property type="protein sequence ID" value="YDL173W"/>
    <property type="gene ID" value="YDL173W"/>
</dbReference>
<dbReference type="GeneID" id="851381"/>
<dbReference type="KEGG" id="sce:YDL173W"/>
<dbReference type="AGR" id="SGD:S000002332"/>
<dbReference type="SGD" id="S000002332">
    <property type="gene designation" value="PAR32"/>
</dbReference>
<dbReference type="VEuPathDB" id="FungiDB:YDL173W"/>
<dbReference type="eggNOG" id="ENOG502S3S2">
    <property type="taxonomic scope" value="Eukaryota"/>
</dbReference>
<dbReference type="HOGENOM" id="CLU_082191_0_0_1"/>
<dbReference type="InParanoid" id="Q12515"/>
<dbReference type="OMA" id="YKVTFGR"/>
<dbReference type="OrthoDB" id="3063476at2759"/>
<dbReference type="BioCyc" id="YEAST:G3O-29562-MONOMER"/>
<dbReference type="BioGRID-ORCS" id="851381">
    <property type="hits" value="6 hits in 10 CRISPR screens"/>
</dbReference>
<dbReference type="PRO" id="PR:Q12515"/>
<dbReference type="Proteomes" id="UP000002311">
    <property type="component" value="Chromosome IV"/>
</dbReference>
<dbReference type="RNAct" id="Q12515">
    <property type="molecule type" value="protein"/>
</dbReference>
<dbReference type="GO" id="GO:0005737">
    <property type="term" value="C:cytoplasm"/>
    <property type="evidence" value="ECO:0000314"/>
    <property type="project" value="SGD"/>
</dbReference>
<dbReference type="InterPro" id="IPR053203">
    <property type="entry name" value="Cisplatin_resist-associated"/>
</dbReference>
<dbReference type="InterPro" id="IPR022024">
    <property type="entry name" value="DUF3602"/>
</dbReference>
<dbReference type="PANTHER" id="PTHR34693">
    <property type="entry name" value="PROTEIN PAR32"/>
    <property type="match status" value="1"/>
</dbReference>
<dbReference type="PANTHER" id="PTHR34693:SF1">
    <property type="entry name" value="PROTEIN PAR32"/>
    <property type="match status" value="1"/>
</dbReference>
<dbReference type="Pfam" id="PF12223">
    <property type="entry name" value="DUF3602"/>
    <property type="match status" value="1"/>
</dbReference>
<comment type="function">
    <text evidence="4">Involved in resistance to cisplatin.</text>
</comment>
<comment type="subcellular location">
    <subcellularLocation>
        <location evidence="2">Cytoplasm</location>
    </subcellularLocation>
</comment>
<comment type="PTM">
    <text>Hyperphosphorylated after treatment with rapamycin in a TAP42-dependent manner.</text>
</comment>
<comment type="miscellaneous">
    <text evidence="3">Present with 1140 molecules/cell in log phase SD medium.</text>
</comment>
<sequence length="295" mass="31886">MATFNPQNEMENQARVQEYKVSTGRGGAGNIHKSMSKPSPVLLPLKSNSKTVANNNNNGSNQEKVPRFAIGRGGAGNIFHDPHLTRSAQQLDSNDNINYNDVINDIDDYISPITSDMVDEGGSNPVTNTRSRISATRSHQSLHATTSSPNNNAPIVVGRGGAGNIFFNKKKVASNGGNEEDEIRGGNIEDEDTINANEDNLFVVTSNGNALAAIKSTSKKPKNKLKGKSAPEKFAIGRGGAGNIISPKSSRNTINHNLNDDDEDKFNLKDDNGKEKKKKKKKKSGFFSSLKTMFN</sequence>
<proteinExistence type="evidence at protein level"/>
<accession>Q12515</accession>
<accession>D6VRH9</accession>
<accession>Q6Q543</accession>
<keyword id="KW-0007">Acetylation</keyword>
<keyword id="KW-0963">Cytoplasm</keyword>
<keyword id="KW-0597">Phosphoprotein</keyword>
<keyword id="KW-1185">Reference proteome</keyword>
<reference key="1">
    <citation type="journal article" date="1997" name="Nature">
        <title>The nucleotide sequence of Saccharomyces cerevisiae chromosome IV.</title>
        <authorList>
            <person name="Jacq C."/>
            <person name="Alt-Moerbe J."/>
            <person name="Andre B."/>
            <person name="Arnold W."/>
            <person name="Bahr A."/>
            <person name="Ballesta J.P.G."/>
            <person name="Bargues M."/>
            <person name="Baron L."/>
            <person name="Becker A."/>
            <person name="Biteau N."/>
            <person name="Bloecker H."/>
            <person name="Blugeon C."/>
            <person name="Boskovic J."/>
            <person name="Brandt P."/>
            <person name="Brueckner M."/>
            <person name="Buitrago M.J."/>
            <person name="Coster F."/>
            <person name="Delaveau T."/>
            <person name="del Rey F."/>
            <person name="Dujon B."/>
            <person name="Eide L.G."/>
            <person name="Garcia-Cantalejo J.M."/>
            <person name="Goffeau A."/>
            <person name="Gomez-Peris A."/>
            <person name="Granotier C."/>
            <person name="Hanemann V."/>
            <person name="Hankeln T."/>
            <person name="Hoheisel J.D."/>
            <person name="Jaeger W."/>
            <person name="Jimenez A."/>
            <person name="Jonniaux J.-L."/>
            <person name="Kraemer C."/>
            <person name="Kuester H."/>
            <person name="Laamanen P."/>
            <person name="Legros Y."/>
            <person name="Louis E.J."/>
            <person name="Moeller-Rieker S."/>
            <person name="Monnet A."/>
            <person name="Moro M."/>
            <person name="Mueller-Auer S."/>
            <person name="Nussbaumer B."/>
            <person name="Paricio N."/>
            <person name="Paulin L."/>
            <person name="Perea J."/>
            <person name="Perez-Alonso M."/>
            <person name="Perez-Ortin J.E."/>
            <person name="Pohl T.M."/>
            <person name="Prydz H."/>
            <person name="Purnelle B."/>
            <person name="Rasmussen S.W."/>
            <person name="Remacha M.A."/>
            <person name="Revuelta J.L."/>
            <person name="Rieger M."/>
            <person name="Salom D."/>
            <person name="Saluz H.P."/>
            <person name="Saiz J.E."/>
            <person name="Saren A.-M."/>
            <person name="Schaefer M."/>
            <person name="Scharfe M."/>
            <person name="Schmidt E.R."/>
            <person name="Schneider C."/>
            <person name="Scholler P."/>
            <person name="Schwarz S."/>
            <person name="Soler-Mira A."/>
            <person name="Urrestarazu L.A."/>
            <person name="Verhasselt P."/>
            <person name="Vissers S."/>
            <person name="Voet M."/>
            <person name="Volckaert G."/>
            <person name="Wagner G."/>
            <person name="Wambutt R."/>
            <person name="Wedler E."/>
            <person name="Wedler H."/>
            <person name="Woelfl S."/>
            <person name="Harris D.E."/>
            <person name="Bowman S."/>
            <person name="Brown D."/>
            <person name="Churcher C.M."/>
            <person name="Connor R."/>
            <person name="Dedman K."/>
            <person name="Gentles S."/>
            <person name="Hamlin N."/>
            <person name="Hunt S."/>
            <person name="Jones L."/>
            <person name="McDonald S."/>
            <person name="Murphy L.D."/>
            <person name="Niblett D."/>
            <person name="Odell C."/>
            <person name="Oliver K."/>
            <person name="Rajandream M.A."/>
            <person name="Richards C."/>
            <person name="Shore L."/>
            <person name="Walsh S.V."/>
            <person name="Barrell B.G."/>
            <person name="Dietrich F.S."/>
            <person name="Mulligan J.T."/>
            <person name="Allen E."/>
            <person name="Araujo R."/>
            <person name="Aviles E."/>
            <person name="Berno A."/>
            <person name="Carpenter J."/>
            <person name="Chen E."/>
            <person name="Cherry J.M."/>
            <person name="Chung E."/>
            <person name="Duncan M."/>
            <person name="Hunicke-Smith S."/>
            <person name="Hyman R.W."/>
            <person name="Komp C."/>
            <person name="Lashkari D."/>
            <person name="Lew H."/>
            <person name="Lin D."/>
            <person name="Mosedale D."/>
            <person name="Nakahara K."/>
            <person name="Namath A."/>
            <person name="Oefner P."/>
            <person name="Oh C."/>
            <person name="Petel F.X."/>
            <person name="Roberts D."/>
            <person name="Schramm S."/>
            <person name="Schroeder M."/>
            <person name="Shogren T."/>
            <person name="Shroff N."/>
            <person name="Winant A."/>
            <person name="Yelton M.A."/>
            <person name="Botstein D."/>
            <person name="Davis R.W."/>
            <person name="Johnston M."/>
            <person name="Andrews S."/>
            <person name="Brinkman R."/>
            <person name="Cooper J."/>
            <person name="Ding H."/>
            <person name="Du Z."/>
            <person name="Favello A."/>
            <person name="Fulton L."/>
            <person name="Gattung S."/>
            <person name="Greco T."/>
            <person name="Hallsworth K."/>
            <person name="Hawkins J."/>
            <person name="Hillier L.W."/>
            <person name="Jier M."/>
            <person name="Johnson D."/>
            <person name="Johnston L."/>
            <person name="Kirsten J."/>
            <person name="Kucaba T."/>
            <person name="Langston Y."/>
            <person name="Latreille P."/>
            <person name="Le T."/>
            <person name="Mardis E."/>
            <person name="Menezes S."/>
            <person name="Miller N."/>
            <person name="Nhan M."/>
            <person name="Pauley A."/>
            <person name="Peluso D."/>
            <person name="Rifkin L."/>
            <person name="Riles L."/>
            <person name="Taich A."/>
            <person name="Trevaskis E."/>
            <person name="Vignati D."/>
            <person name="Wilcox L."/>
            <person name="Wohldman P."/>
            <person name="Vaudin M."/>
            <person name="Wilson R."/>
            <person name="Waterston R."/>
            <person name="Albermann K."/>
            <person name="Hani J."/>
            <person name="Heumann K."/>
            <person name="Kleine K."/>
            <person name="Mewes H.-W."/>
            <person name="Zollner A."/>
            <person name="Zaccaria P."/>
        </authorList>
    </citation>
    <scope>NUCLEOTIDE SEQUENCE [LARGE SCALE GENOMIC DNA]</scope>
    <source>
        <strain>ATCC 204508 / S288c</strain>
    </source>
</reference>
<reference key="2">
    <citation type="journal article" date="2014" name="G3 (Bethesda)">
        <title>The reference genome sequence of Saccharomyces cerevisiae: Then and now.</title>
        <authorList>
            <person name="Engel S.R."/>
            <person name="Dietrich F.S."/>
            <person name="Fisk D.G."/>
            <person name="Binkley G."/>
            <person name="Balakrishnan R."/>
            <person name="Costanzo M.C."/>
            <person name="Dwight S.S."/>
            <person name="Hitz B.C."/>
            <person name="Karra K."/>
            <person name="Nash R.S."/>
            <person name="Weng S."/>
            <person name="Wong E.D."/>
            <person name="Lloyd P."/>
            <person name="Skrzypek M.S."/>
            <person name="Miyasato S.R."/>
            <person name="Simison M."/>
            <person name="Cherry J.M."/>
        </authorList>
    </citation>
    <scope>GENOME REANNOTATION</scope>
    <source>
        <strain>ATCC 204508 / S288c</strain>
    </source>
</reference>
<reference key="3">
    <citation type="journal article" date="2007" name="Genome Res.">
        <title>Approaching a complete repository of sequence-verified protein-encoding clones for Saccharomyces cerevisiae.</title>
        <authorList>
            <person name="Hu Y."/>
            <person name="Rolfs A."/>
            <person name="Bhullar B."/>
            <person name="Murthy T.V.S."/>
            <person name="Zhu C."/>
            <person name="Berger M.F."/>
            <person name="Camargo A.A."/>
            <person name="Kelley F."/>
            <person name="McCarron S."/>
            <person name="Jepson D."/>
            <person name="Richardson A."/>
            <person name="Raphael J."/>
            <person name="Moreira D."/>
            <person name="Taycher E."/>
            <person name="Zuo D."/>
            <person name="Mohr S."/>
            <person name="Kane M.F."/>
            <person name="Williamson J."/>
            <person name="Simpson A.J.G."/>
            <person name="Bulyk M.L."/>
            <person name="Harlow E."/>
            <person name="Marsischky G."/>
            <person name="Kolodner R.D."/>
            <person name="LaBaer J."/>
        </authorList>
    </citation>
    <scope>NUCLEOTIDE SEQUENCE [GENOMIC DNA]</scope>
    <source>
        <strain>ATCC 204508 / S288c</strain>
    </source>
</reference>
<reference key="4">
    <citation type="journal article" date="2003" name="Nature">
        <title>Global analysis of protein localization in budding yeast.</title>
        <authorList>
            <person name="Huh W.-K."/>
            <person name="Falvo J.V."/>
            <person name="Gerke L.C."/>
            <person name="Carroll A.S."/>
            <person name="Howson R.W."/>
            <person name="Weissman J.S."/>
            <person name="O'Shea E.K."/>
        </authorList>
    </citation>
    <scope>SUBCELLULAR LOCATION [LARGE SCALE ANALYSIS]</scope>
</reference>
<reference key="5">
    <citation type="journal article" date="2003" name="Nature">
        <title>Global analysis of protein expression in yeast.</title>
        <authorList>
            <person name="Ghaemmaghami S."/>
            <person name="Huh W.-K."/>
            <person name="Bower K."/>
            <person name="Howson R.W."/>
            <person name="Belle A."/>
            <person name="Dephoure N."/>
            <person name="O'Shea E.K."/>
            <person name="Weissman J.S."/>
        </authorList>
    </citation>
    <scope>LEVEL OF PROTEIN EXPRESSION [LARGE SCALE ANALYSIS]</scope>
</reference>
<reference key="6">
    <citation type="journal article" date="2005" name="Cancer Res.">
        <title>Genome-wide screen identifies genes whose inactivation confer resistance to cisplatin in Saccharomyces cerevisiae.</title>
        <authorList>
            <person name="Huang R.-Y."/>
            <person name="Eddy M."/>
            <person name="Vujcic M."/>
            <person name="Kowalski D."/>
        </authorList>
    </citation>
    <scope>FUNCTION</scope>
</reference>
<reference key="7">
    <citation type="journal article" date="2007" name="J. Proteome Res.">
        <title>Large-scale phosphorylation analysis of alpha-factor-arrested Saccharomyces cerevisiae.</title>
        <authorList>
            <person name="Li X."/>
            <person name="Gerber S.A."/>
            <person name="Rudner A.D."/>
            <person name="Beausoleil S.A."/>
            <person name="Haas W."/>
            <person name="Villen J."/>
            <person name="Elias J.E."/>
            <person name="Gygi S.P."/>
        </authorList>
    </citation>
    <scope>PHOSPHORYLATION [LARGE SCALE ANALYSIS] AT SER-36; SER-39; SER-47; SER-147 AND SER-246</scope>
    <scope>IDENTIFICATION BY MASS SPECTROMETRY [LARGE SCALE ANALYSIS]</scope>
    <source>
        <strain>ADR376</strain>
    </source>
</reference>
<reference key="8">
    <citation type="journal article" date="2008" name="Mol. Cell. Proteomics">
        <title>A multidimensional chromatography technology for in-depth phosphoproteome analysis.</title>
        <authorList>
            <person name="Albuquerque C.P."/>
            <person name="Smolka M.B."/>
            <person name="Payne S.H."/>
            <person name="Bafna V."/>
            <person name="Eng J."/>
            <person name="Zhou H."/>
        </authorList>
    </citation>
    <scope>PHOSPHORYLATION [LARGE SCALE ANALYSIS] AT SER-39 AND SER-123</scope>
    <scope>IDENTIFICATION BY MASS SPECTROMETRY [LARGE SCALE ANALYSIS]</scope>
</reference>
<reference key="9">
    <citation type="journal article" date="2009" name="Genes Dev.">
        <title>Characterization of the rapamycin-sensitive phosphoproteome reveals that Sch9 is a central coordinator of protein synthesis.</title>
        <authorList>
            <person name="Huber A."/>
            <person name="Bodenmiller B."/>
            <person name="Uotila A."/>
            <person name="Stahl M."/>
            <person name="Wanka S."/>
            <person name="Gerrits B."/>
            <person name="Aebersold R."/>
            <person name="Loewith R."/>
        </authorList>
    </citation>
    <scope>IDENTIFICATION BY MASS SPECTROMETRY</scope>
    <scope>PHOSPHORYLATION</scope>
</reference>
<reference key="10">
    <citation type="journal article" date="2009" name="Science">
        <title>Global analysis of Cdk1 substrate phosphorylation sites provides insights into evolution.</title>
        <authorList>
            <person name="Holt L.J."/>
            <person name="Tuch B.B."/>
            <person name="Villen J."/>
            <person name="Johnson A.D."/>
            <person name="Gygi S.P."/>
            <person name="Morgan D.O."/>
        </authorList>
    </citation>
    <scope>PHOSPHORYLATION [LARGE SCALE ANALYSIS] AT SER-39; SER-138; SER-141 AND SER-246</scope>
    <scope>IDENTIFICATION BY MASS SPECTROMETRY [LARGE SCALE ANALYSIS]</scope>
</reference>
<reference key="11">
    <citation type="journal article" date="2012" name="Proc. Natl. Acad. Sci. U.S.A.">
        <title>N-terminal acetylome analyses and functional insights of the N-terminal acetyltransferase NatB.</title>
        <authorList>
            <person name="Van Damme P."/>
            <person name="Lasa M."/>
            <person name="Polevoda B."/>
            <person name="Gazquez C."/>
            <person name="Elosegui-Artola A."/>
            <person name="Kim D.S."/>
            <person name="De Juan-Pardo E."/>
            <person name="Demeyer K."/>
            <person name="Hole K."/>
            <person name="Larrea E."/>
            <person name="Timmerman E."/>
            <person name="Prieto J."/>
            <person name="Arnesen T."/>
            <person name="Sherman F."/>
            <person name="Gevaert K."/>
            <person name="Aldabe R."/>
        </authorList>
    </citation>
    <scope>ACETYLATION [LARGE SCALE ANALYSIS] AT ALA-2</scope>
    <scope>CLEAVAGE OF INITIATOR METHIONINE [LARGE SCALE ANALYSIS]</scope>
    <scope>IDENTIFICATION BY MASS SPECTROMETRY [LARGE SCALE ANALYSIS]</scope>
</reference>
<organism>
    <name type="scientific">Saccharomyces cerevisiae (strain ATCC 204508 / S288c)</name>
    <name type="common">Baker's yeast</name>
    <dbReference type="NCBI Taxonomy" id="559292"/>
    <lineage>
        <taxon>Eukaryota</taxon>
        <taxon>Fungi</taxon>
        <taxon>Dikarya</taxon>
        <taxon>Ascomycota</taxon>
        <taxon>Saccharomycotina</taxon>
        <taxon>Saccharomycetes</taxon>
        <taxon>Saccharomycetales</taxon>
        <taxon>Saccharomycetaceae</taxon>
        <taxon>Saccharomyces</taxon>
    </lineage>
</organism>
<evidence type="ECO:0000256" key="1">
    <source>
        <dbReference type="SAM" id="MobiDB-lite"/>
    </source>
</evidence>
<evidence type="ECO:0000269" key="2">
    <source>
    </source>
</evidence>
<evidence type="ECO:0000269" key="3">
    <source>
    </source>
</evidence>
<evidence type="ECO:0000269" key="4">
    <source>
    </source>
</evidence>
<evidence type="ECO:0000305" key="5"/>
<evidence type="ECO:0007744" key="6">
    <source>
    </source>
</evidence>
<evidence type="ECO:0007744" key="7">
    <source>
    </source>
</evidence>
<evidence type="ECO:0007744" key="8">
    <source>
    </source>
</evidence>
<evidence type="ECO:0007744" key="9">
    <source>
    </source>
</evidence>
<gene>
    <name type="primary">PAR32</name>
    <name type="ordered locus">YDL173W</name>
</gene>
<feature type="initiator methionine" description="Removed" evidence="9">
    <location>
        <position position="1"/>
    </location>
</feature>
<feature type="chain" id="PRO_0000240879" description="Protein PAR32">
    <location>
        <begin position="2"/>
        <end position="295"/>
    </location>
</feature>
<feature type="region of interest" description="Disordered" evidence="1">
    <location>
        <begin position="134"/>
        <end position="156"/>
    </location>
</feature>
<feature type="region of interest" description="Disordered" evidence="1">
    <location>
        <begin position="217"/>
        <end position="295"/>
    </location>
</feature>
<feature type="compositionally biased region" description="Polar residues" evidence="1">
    <location>
        <begin position="134"/>
        <end position="153"/>
    </location>
</feature>
<feature type="compositionally biased region" description="Basic residues" evidence="1">
    <location>
        <begin position="217"/>
        <end position="227"/>
    </location>
</feature>
<feature type="compositionally biased region" description="Polar residues" evidence="1">
    <location>
        <begin position="246"/>
        <end position="256"/>
    </location>
</feature>
<feature type="compositionally biased region" description="Basic and acidic residues" evidence="1">
    <location>
        <begin position="265"/>
        <end position="274"/>
    </location>
</feature>
<feature type="compositionally biased region" description="Basic residues" evidence="1">
    <location>
        <begin position="275"/>
        <end position="284"/>
    </location>
</feature>
<feature type="compositionally biased region" description="Low complexity" evidence="1">
    <location>
        <begin position="285"/>
        <end position="295"/>
    </location>
</feature>
<feature type="modified residue" description="N-acetylalanine" evidence="9">
    <location>
        <position position="2"/>
    </location>
</feature>
<feature type="modified residue" description="Phosphoserine" evidence="6">
    <location>
        <position position="36"/>
    </location>
</feature>
<feature type="modified residue" description="Phosphoserine" evidence="6 7 8">
    <location>
        <position position="39"/>
    </location>
</feature>
<feature type="modified residue" description="Phosphoserine" evidence="6">
    <location>
        <position position="47"/>
    </location>
</feature>
<feature type="modified residue" description="Phosphoserine" evidence="7">
    <location>
        <position position="123"/>
    </location>
</feature>
<feature type="modified residue" description="Phosphoserine" evidence="8">
    <location>
        <position position="138"/>
    </location>
</feature>
<feature type="modified residue" description="Phosphoserine" evidence="8">
    <location>
        <position position="141"/>
    </location>
</feature>
<feature type="modified residue" description="Phosphoserine" evidence="6">
    <location>
        <position position="147"/>
    </location>
</feature>
<feature type="modified residue" description="Phosphoserine" evidence="6 8">
    <location>
        <position position="246"/>
    </location>
</feature>
<feature type="sequence conflict" description="In Ref. 3; AAS56895." evidence="5" ref="3">
    <original>A</original>
    <variation>V</variation>
    <location>
        <position position="135"/>
    </location>
</feature>
<name>PAR32_YEAST</name>